<comment type="function">
    <text evidence="3">High-affinity zinc transport protein.</text>
</comment>
<comment type="interaction">
    <interactant intactId="EBI-29677">
        <id>P32804</id>
    </interactant>
    <interactant intactId="EBI-3761544">
        <id>P51533</id>
        <label>PDR10</label>
    </interactant>
    <organismsDiffer>false</organismsDiffer>
    <experiments>2</experiments>
</comment>
<comment type="interaction">
    <interactant intactId="EBI-29677">
        <id>P32804</id>
    </interactant>
    <interactant intactId="EBI-13072">
        <id>Q04182</id>
        <label>PDR15</label>
    </interactant>
    <organismsDiffer>false</organismsDiffer>
    <experiments>2</experiments>
</comment>
<comment type="interaction">
    <interactant intactId="EBI-29677">
        <id>P32804</id>
    </interactant>
    <interactant intactId="EBI-13038">
        <id>P33302</id>
        <label>PDR5</label>
    </interactant>
    <organismsDiffer>false</organismsDiffer>
    <experiments>2</experiments>
</comment>
<comment type="subcellular location">
    <subcellularLocation>
        <location evidence="4">Membrane</location>
        <topology evidence="4">Multi-pass membrane protein</topology>
    </subcellularLocation>
</comment>
<comment type="induction">
    <text evidence="3">Induced in activity &gt;100-fold in response to zinc-limiting growth conditions. Not expressed in zinc-replete cells.</text>
</comment>
<comment type="miscellaneous">
    <text>Inhibited by Cu(2+) and Fe(3+) ions.</text>
</comment>
<comment type="similarity">
    <text evidence="4">Belongs to the ZIP transporter (TC 2.A.5) family.</text>
</comment>
<organism>
    <name type="scientific">Saccharomyces cerevisiae (strain ATCC 204508 / S288c)</name>
    <name type="common">Baker's yeast</name>
    <dbReference type="NCBI Taxonomy" id="559292"/>
    <lineage>
        <taxon>Eukaryota</taxon>
        <taxon>Fungi</taxon>
        <taxon>Dikarya</taxon>
        <taxon>Ascomycota</taxon>
        <taxon>Saccharomycotina</taxon>
        <taxon>Saccharomycetes</taxon>
        <taxon>Saccharomycetales</taxon>
        <taxon>Saccharomycetaceae</taxon>
        <taxon>Saccharomyces</taxon>
    </lineage>
</organism>
<keyword id="KW-0406">Ion transport</keyword>
<keyword id="KW-0472">Membrane</keyword>
<keyword id="KW-1185">Reference proteome</keyword>
<keyword id="KW-0812">Transmembrane</keyword>
<keyword id="KW-1133">Transmembrane helix</keyword>
<keyword id="KW-0813">Transport</keyword>
<keyword id="KW-0862">Zinc</keyword>
<keyword id="KW-0864">Zinc transport</keyword>
<protein>
    <recommendedName>
        <fullName>Zinc-regulated transporter 1</fullName>
    </recommendedName>
    <alternativeName>
        <fullName>High-affinity zinc transport protein ZRT1</fullName>
    </alternativeName>
</protein>
<feature type="chain" id="PRO_0000068768" description="Zinc-regulated transporter 1">
    <location>
        <begin position="1"/>
        <end position="376"/>
    </location>
</feature>
<feature type="topological domain" description="Extracellular" evidence="1">
    <location>
        <begin position="1"/>
        <end position="50"/>
    </location>
</feature>
<feature type="transmembrane region" description="Helical" evidence="1">
    <location>
        <begin position="51"/>
        <end position="71"/>
    </location>
</feature>
<feature type="topological domain" description="Cytoplasmic" evidence="1">
    <location>
        <begin position="72"/>
        <end position="80"/>
    </location>
</feature>
<feature type="transmembrane region" description="Helical" evidence="1">
    <location>
        <begin position="81"/>
        <end position="101"/>
    </location>
</feature>
<feature type="topological domain" description="Extracellular" evidence="1">
    <location>
        <begin position="102"/>
        <end position="122"/>
    </location>
</feature>
<feature type="transmembrane region" description="Helical" evidence="1">
    <location>
        <begin position="123"/>
        <end position="143"/>
    </location>
</feature>
<feature type="topological domain" description="Cytoplasmic" evidence="1">
    <location>
        <begin position="144"/>
        <end position="216"/>
    </location>
</feature>
<feature type="transmembrane region" description="Helical" evidence="1">
    <location>
        <begin position="217"/>
        <end position="237"/>
    </location>
</feature>
<feature type="topological domain" description="Extracellular" evidence="1">
    <location>
        <begin position="238"/>
        <end position="242"/>
    </location>
</feature>
<feature type="transmembrane region" description="Helical" evidence="1">
    <location>
        <begin position="243"/>
        <end position="263"/>
    </location>
</feature>
<feature type="topological domain" description="Cytoplasmic" evidence="1">
    <location>
        <begin position="264"/>
        <end position="278"/>
    </location>
</feature>
<feature type="transmembrane region" description="Helical" evidence="1">
    <location>
        <begin position="279"/>
        <end position="299"/>
    </location>
</feature>
<feature type="topological domain" description="Extracellular" evidence="1">
    <location>
        <begin position="300"/>
        <end position="310"/>
    </location>
</feature>
<feature type="transmembrane region" description="Helical" evidence="1">
    <location>
        <begin position="311"/>
        <end position="331"/>
    </location>
</feature>
<feature type="topological domain" description="Cytoplasmic" evidence="1">
    <location>
        <begin position="332"/>
        <end position="354"/>
    </location>
</feature>
<feature type="transmembrane region" description="Helical" evidence="1">
    <location>
        <begin position="355"/>
        <end position="375"/>
    </location>
</feature>
<feature type="topological domain" description="Extracellular" evidence="1">
    <location>
        <position position="376"/>
    </location>
</feature>
<feature type="region of interest" description="Disordered" evidence="2">
    <location>
        <begin position="177"/>
        <end position="196"/>
    </location>
</feature>
<feature type="compositionally biased region" description="Polar residues" evidence="2">
    <location>
        <begin position="177"/>
        <end position="191"/>
    </location>
</feature>
<evidence type="ECO:0000255" key="1"/>
<evidence type="ECO:0000256" key="2">
    <source>
        <dbReference type="SAM" id="MobiDB-lite"/>
    </source>
</evidence>
<evidence type="ECO:0000269" key="3">
    <source>
    </source>
</evidence>
<evidence type="ECO:0000305" key="4"/>
<proteinExistence type="evidence at protein level"/>
<accession>P32804</accession>
<accession>D6VV80</accession>
<dbReference type="EMBL" id="X67787">
    <property type="protein sequence ID" value="CAA47997.1"/>
    <property type="molecule type" value="Genomic_DNA"/>
</dbReference>
<dbReference type="EMBL" id="Z72777">
    <property type="protein sequence ID" value="CAA96975.1"/>
    <property type="molecule type" value="Genomic_DNA"/>
</dbReference>
<dbReference type="EMBL" id="X94357">
    <property type="protein sequence ID" value="CAA64132.1"/>
    <property type="molecule type" value="Genomic_DNA"/>
</dbReference>
<dbReference type="EMBL" id="BK006941">
    <property type="protein sequence ID" value="DAA07864.1"/>
    <property type="molecule type" value="Genomic_DNA"/>
</dbReference>
<dbReference type="PIR" id="S33654">
    <property type="entry name" value="S33654"/>
</dbReference>
<dbReference type="RefSeq" id="NP_011259.1">
    <property type="nucleotide sequence ID" value="NM_001181121.1"/>
</dbReference>
<dbReference type="BioGRID" id="33024">
    <property type="interactions" value="193"/>
</dbReference>
<dbReference type="FunCoup" id="P32804">
    <property type="interactions" value="764"/>
</dbReference>
<dbReference type="IntAct" id="P32804">
    <property type="interactions" value="5"/>
</dbReference>
<dbReference type="MINT" id="P32804"/>
<dbReference type="STRING" id="4932.YGL255W"/>
<dbReference type="TCDB" id="2.A.5.1.1">
    <property type="family name" value="the zinc (zn(2+))-iron (fe(2+)) permease (zip) family"/>
</dbReference>
<dbReference type="iPTMnet" id="P32804"/>
<dbReference type="PaxDb" id="4932-YGL255W"/>
<dbReference type="PeptideAtlas" id="P32804"/>
<dbReference type="EnsemblFungi" id="YGL255W_mRNA">
    <property type="protein sequence ID" value="YGL255W"/>
    <property type="gene ID" value="YGL255W"/>
</dbReference>
<dbReference type="GeneID" id="852637"/>
<dbReference type="KEGG" id="sce:YGL255W"/>
<dbReference type="AGR" id="SGD:S000003224"/>
<dbReference type="SGD" id="S000003224">
    <property type="gene designation" value="ZRT1"/>
</dbReference>
<dbReference type="VEuPathDB" id="FungiDB:YGL255W"/>
<dbReference type="eggNOG" id="KOG1558">
    <property type="taxonomic scope" value="Eukaryota"/>
</dbReference>
<dbReference type="HOGENOM" id="CLU_027089_0_2_1"/>
<dbReference type="InParanoid" id="P32804"/>
<dbReference type="OMA" id="YNPGSFT"/>
<dbReference type="OrthoDB" id="448280at2759"/>
<dbReference type="BioCyc" id="YEAST:G3O-30724-MONOMER"/>
<dbReference type="BioGRID-ORCS" id="852637">
    <property type="hits" value="3 hits in 10 CRISPR screens"/>
</dbReference>
<dbReference type="PRO" id="PR:P32804"/>
<dbReference type="Proteomes" id="UP000002311">
    <property type="component" value="Chromosome VII"/>
</dbReference>
<dbReference type="RNAct" id="P32804">
    <property type="molecule type" value="protein"/>
</dbReference>
<dbReference type="GO" id="GO:0071944">
    <property type="term" value="C:cell periphery"/>
    <property type="evidence" value="ECO:0007005"/>
    <property type="project" value="SGD"/>
</dbReference>
<dbReference type="GO" id="GO:0005783">
    <property type="term" value="C:endoplasmic reticulum"/>
    <property type="evidence" value="ECO:0007005"/>
    <property type="project" value="SGD"/>
</dbReference>
<dbReference type="GO" id="GO:0005886">
    <property type="term" value="C:plasma membrane"/>
    <property type="evidence" value="ECO:0000315"/>
    <property type="project" value="SGD"/>
</dbReference>
<dbReference type="GO" id="GO:0000006">
    <property type="term" value="F:high-affinity zinc transmembrane transporter activity"/>
    <property type="evidence" value="ECO:0000315"/>
    <property type="project" value="SGD"/>
</dbReference>
<dbReference type="GO" id="GO:0071578">
    <property type="term" value="P:zinc ion import across plasma membrane"/>
    <property type="evidence" value="ECO:0000315"/>
    <property type="project" value="SGD"/>
</dbReference>
<dbReference type="InterPro" id="IPR003689">
    <property type="entry name" value="ZIP"/>
</dbReference>
<dbReference type="InterPro" id="IPR004698">
    <property type="entry name" value="Zn/Fe_permease_fun/pln"/>
</dbReference>
<dbReference type="NCBIfam" id="TIGR00820">
    <property type="entry name" value="zip"/>
    <property type="match status" value="1"/>
</dbReference>
<dbReference type="PANTHER" id="PTHR11040:SF32">
    <property type="entry name" value="ZINC-REGULATED TRANSPORTER 1"/>
    <property type="match status" value="1"/>
</dbReference>
<dbReference type="PANTHER" id="PTHR11040">
    <property type="entry name" value="ZINC/IRON TRANSPORTER"/>
    <property type="match status" value="1"/>
</dbReference>
<dbReference type="Pfam" id="PF02535">
    <property type="entry name" value="Zip"/>
    <property type="match status" value="1"/>
</dbReference>
<reference key="1">
    <citation type="journal article" date="1993" name="Yeast">
        <title>Identification of a gene encoding a novel zinc finger protein in Saccharomyces cerevisiae.</title>
        <authorList>
            <person name="Breitwieser W."/>
            <person name="Price C."/>
            <person name="Schuster T."/>
        </authorList>
    </citation>
    <scope>NUCLEOTIDE SEQUENCE [GENOMIC DNA]</scope>
    <source>
        <strain>ATCC 200060 / W303</strain>
    </source>
</reference>
<reference key="2">
    <citation type="journal article" date="1996" name="Yeast">
        <title>Sequence of a 39,411 bp DNA fragment covering the left end of chromosome VII of Saccharomyces cerevisiae.</title>
        <authorList>
            <person name="Coissac E."/>
            <person name="Maillier E."/>
            <person name="Robineau S."/>
            <person name="Netter P."/>
        </authorList>
    </citation>
    <scope>NUCLEOTIDE SEQUENCE [GENOMIC DNA]</scope>
    <source>
        <strain>ATCC 96604 / S288c / FY1679</strain>
    </source>
</reference>
<reference key="3">
    <citation type="journal article" date="1997" name="Nature">
        <title>The nucleotide sequence of Saccharomyces cerevisiae chromosome VII.</title>
        <authorList>
            <person name="Tettelin H."/>
            <person name="Agostoni-Carbone M.L."/>
            <person name="Albermann K."/>
            <person name="Albers M."/>
            <person name="Arroyo J."/>
            <person name="Backes U."/>
            <person name="Barreiros T."/>
            <person name="Bertani I."/>
            <person name="Bjourson A.J."/>
            <person name="Brueckner M."/>
            <person name="Bruschi C.V."/>
            <person name="Carignani G."/>
            <person name="Castagnoli L."/>
            <person name="Cerdan E."/>
            <person name="Clemente M.L."/>
            <person name="Coblenz A."/>
            <person name="Coglievina M."/>
            <person name="Coissac E."/>
            <person name="Defoor E."/>
            <person name="Del Bino S."/>
            <person name="Delius H."/>
            <person name="Delneri D."/>
            <person name="de Wergifosse P."/>
            <person name="Dujon B."/>
            <person name="Durand P."/>
            <person name="Entian K.-D."/>
            <person name="Eraso P."/>
            <person name="Escribano V."/>
            <person name="Fabiani L."/>
            <person name="Fartmann B."/>
            <person name="Feroli F."/>
            <person name="Feuermann M."/>
            <person name="Frontali L."/>
            <person name="Garcia-Gonzalez M."/>
            <person name="Garcia-Saez M.I."/>
            <person name="Goffeau A."/>
            <person name="Guerreiro P."/>
            <person name="Hani J."/>
            <person name="Hansen M."/>
            <person name="Hebling U."/>
            <person name="Hernandez K."/>
            <person name="Heumann K."/>
            <person name="Hilger F."/>
            <person name="Hofmann B."/>
            <person name="Indge K.J."/>
            <person name="James C.M."/>
            <person name="Klima R."/>
            <person name="Koetter P."/>
            <person name="Kramer B."/>
            <person name="Kramer W."/>
            <person name="Lauquin G."/>
            <person name="Leuther H."/>
            <person name="Louis E.J."/>
            <person name="Maillier E."/>
            <person name="Marconi A."/>
            <person name="Martegani E."/>
            <person name="Mazon M.J."/>
            <person name="Mazzoni C."/>
            <person name="McReynolds A.D.K."/>
            <person name="Melchioretto P."/>
            <person name="Mewes H.-W."/>
            <person name="Minenkova O."/>
            <person name="Mueller-Auer S."/>
            <person name="Nawrocki A."/>
            <person name="Netter P."/>
            <person name="Neu R."/>
            <person name="Nombela C."/>
            <person name="Oliver S.G."/>
            <person name="Panzeri L."/>
            <person name="Paoluzi S."/>
            <person name="Plevani P."/>
            <person name="Portetelle D."/>
            <person name="Portillo F."/>
            <person name="Potier S."/>
            <person name="Purnelle B."/>
            <person name="Rieger M."/>
            <person name="Riles L."/>
            <person name="Rinaldi T."/>
            <person name="Robben J."/>
            <person name="Rodrigues-Pousada C."/>
            <person name="Rodriguez-Belmonte E."/>
            <person name="Rodriguez-Torres A.M."/>
            <person name="Rose M."/>
            <person name="Ruzzi M."/>
            <person name="Saliola M."/>
            <person name="Sanchez-Perez M."/>
            <person name="Schaefer B."/>
            <person name="Schaefer M."/>
            <person name="Scharfe M."/>
            <person name="Schmidheini T."/>
            <person name="Schreer A."/>
            <person name="Skala J."/>
            <person name="Souciet J.-L."/>
            <person name="Steensma H.Y."/>
            <person name="Talla E."/>
            <person name="Thierry A."/>
            <person name="Vandenbol M."/>
            <person name="van der Aart Q.J.M."/>
            <person name="Van Dyck L."/>
            <person name="Vanoni M."/>
            <person name="Verhasselt P."/>
            <person name="Voet M."/>
            <person name="Volckaert G."/>
            <person name="Wambutt R."/>
            <person name="Watson M.D."/>
            <person name="Weber N."/>
            <person name="Wedler E."/>
            <person name="Wedler H."/>
            <person name="Wipfli P."/>
            <person name="Wolf K."/>
            <person name="Wright L.F."/>
            <person name="Zaccaria P."/>
            <person name="Zimmermann M."/>
            <person name="Zollner A."/>
            <person name="Kleine K."/>
        </authorList>
    </citation>
    <scope>NUCLEOTIDE SEQUENCE [LARGE SCALE GENOMIC DNA]</scope>
    <source>
        <strain>ATCC 204508 / S288c</strain>
    </source>
</reference>
<reference key="4">
    <citation type="journal article" date="2014" name="G3 (Bethesda)">
        <title>The reference genome sequence of Saccharomyces cerevisiae: Then and now.</title>
        <authorList>
            <person name="Engel S.R."/>
            <person name="Dietrich F.S."/>
            <person name="Fisk D.G."/>
            <person name="Binkley G."/>
            <person name="Balakrishnan R."/>
            <person name="Costanzo M.C."/>
            <person name="Dwight S.S."/>
            <person name="Hitz B.C."/>
            <person name="Karra K."/>
            <person name="Nash R.S."/>
            <person name="Weng S."/>
            <person name="Wong E.D."/>
            <person name="Lloyd P."/>
            <person name="Skrzypek M.S."/>
            <person name="Miyasato S.R."/>
            <person name="Simison M."/>
            <person name="Cherry J.M."/>
        </authorList>
    </citation>
    <scope>GENOME REANNOTATION</scope>
    <source>
        <strain>ATCC 204508 / S288c</strain>
    </source>
</reference>
<reference key="5">
    <citation type="journal article" date="1996" name="J. Biol. Chem.">
        <title>The ZRT2 gene encodes the low affinity zinc transporter in Saccharomyces cerevisiae.</title>
        <authorList>
            <person name="Zhao H."/>
            <person name="Eide D."/>
        </authorList>
    </citation>
    <scope>FUNCTION</scope>
    <scope>INDUCTION</scope>
</reference>
<reference key="6">
    <citation type="journal article" date="2009" name="Science">
        <title>Global analysis of Cdk1 substrate phosphorylation sites provides insights into evolution.</title>
        <authorList>
            <person name="Holt L.J."/>
            <person name="Tuch B.B."/>
            <person name="Villen J."/>
            <person name="Johnson A.D."/>
            <person name="Gygi S.P."/>
            <person name="Morgan D.O."/>
        </authorList>
    </citation>
    <scope>IDENTIFICATION BY MASS SPECTROMETRY [LARGE SCALE ANALYSIS]</scope>
</reference>
<sequence length="376" mass="41582">MSNVTTPWWKQWDPSEVTLADKTPDDVWKTCVLQGVYFGGNEYNGNLGARISSVFVILFVSTFFTMFPLISTKVKRLRIPLYVYLFAKYFGSGVIVATAFIHLMDPAYGAIGGTTCVGQTGNWGLYSWCPAIMLTSLTFTFLTDLFSSVWVERKYGLSHDHTHDEIKDTVVRNTAAVSSENDNENGTANGSHDTKNGVEYYEDSDATSMDVVQSFQAQFYAFLILEFGVIFHSVMIGLNLGSVGDEFSSLYPVLVFHQSFEGLGIGARLSAIEFPRSKRWWPWALCVAYGLTTPICVAIGLGVRTRYVSGSYTALVISGVLDAISAGILLYTGLVELLARDFIFNPQRTKDLRELSFNVICTLFGAGIMALIGKWA</sequence>
<name>ZRT1_YEAST</name>
<gene>
    <name type="primary">ZRT1</name>
    <name type="ordered locus">YGL255W</name>
    <name type="ORF">NRC376</name>
</gene>